<proteinExistence type="evidence at protein level"/>
<dbReference type="EC" id="2.4.1.-" evidence="5"/>
<dbReference type="EC" id="2.4.1.38" evidence="5"/>
<dbReference type="EC" id="2.4.1.90" evidence="5"/>
<dbReference type="EC" id="2.4.1.275" evidence="5"/>
<dbReference type="EMBL" id="Y12509">
    <property type="protein sequence ID" value="CAA73111.1"/>
    <property type="molecule type" value="mRNA"/>
</dbReference>
<dbReference type="EMBL" id="AF038661">
    <property type="protein sequence ID" value="AAC39734.1"/>
    <property type="molecule type" value="mRNA"/>
</dbReference>
<dbReference type="EMBL" id="AB024435">
    <property type="protein sequence ID" value="BAA75820.1"/>
    <property type="molecule type" value="mRNA"/>
</dbReference>
<dbReference type="EMBL" id="AL590714">
    <property type="status" value="NOT_ANNOTATED_CDS"/>
    <property type="molecule type" value="Genomic_DNA"/>
</dbReference>
<dbReference type="EMBL" id="AK023311">
    <property type="protein sequence ID" value="BAB14520.1"/>
    <property type="molecule type" value="mRNA"/>
</dbReference>
<dbReference type="EMBL" id="CH471121">
    <property type="protein sequence ID" value="EAW52628.1"/>
    <property type="molecule type" value="Genomic_DNA"/>
</dbReference>
<dbReference type="EMBL" id="CH471121">
    <property type="protein sequence ID" value="EAW52629.1"/>
    <property type="molecule type" value="Genomic_DNA"/>
</dbReference>
<dbReference type="EMBL" id="CH471121">
    <property type="protein sequence ID" value="EAW52630.1"/>
    <property type="molecule type" value="Genomic_DNA"/>
</dbReference>
<dbReference type="EMBL" id="CH471121">
    <property type="protein sequence ID" value="EAW52631.1"/>
    <property type="molecule type" value="Genomic_DNA"/>
</dbReference>
<dbReference type="EMBL" id="CH471121">
    <property type="protein sequence ID" value="EAW52632.1"/>
    <property type="molecule type" value="Genomic_DNA"/>
</dbReference>
<dbReference type="EMBL" id="BC000276">
    <property type="protein sequence ID" value="AAH00276.1"/>
    <property type="molecule type" value="mRNA"/>
</dbReference>
<dbReference type="EMBL" id="BC006099">
    <property type="protein sequence ID" value="AAH06099.1"/>
    <property type="molecule type" value="mRNA"/>
</dbReference>
<dbReference type="EMBL" id="BC009985">
    <property type="protein sequence ID" value="AAH09985.1"/>
    <property type="molecule type" value="mRNA"/>
</dbReference>
<dbReference type="CCDS" id="CCDS1222.1">
    <molecule id="O60512-1"/>
</dbReference>
<dbReference type="RefSeq" id="NP_001186802.1">
    <molecule id="O60512-1"/>
    <property type="nucleotide sequence ID" value="NM_001199873.1"/>
</dbReference>
<dbReference type="RefSeq" id="NP_001186803.1">
    <molecule id="O60512-1"/>
    <property type="nucleotide sequence ID" value="NM_001199874.1"/>
</dbReference>
<dbReference type="RefSeq" id="NP_003770.1">
    <molecule id="O60512-1"/>
    <property type="nucleotide sequence ID" value="NM_003779.4"/>
</dbReference>
<dbReference type="RefSeq" id="XP_005245623.1">
    <molecule id="O60512-1"/>
    <property type="nucleotide sequence ID" value="XM_005245566.3"/>
</dbReference>
<dbReference type="RefSeq" id="XP_024306308.1">
    <molecule id="O60512-1"/>
    <property type="nucleotide sequence ID" value="XM_024450540.2"/>
</dbReference>
<dbReference type="RefSeq" id="XP_024306309.1">
    <molecule id="O60512-1"/>
    <property type="nucleotide sequence ID" value="XM_024450541.2"/>
</dbReference>
<dbReference type="RefSeq" id="XP_047289355.1">
    <molecule id="O60512-1"/>
    <property type="nucleotide sequence ID" value="XM_047433399.1"/>
</dbReference>
<dbReference type="RefSeq" id="XP_054195372.1">
    <molecule id="O60512-1"/>
    <property type="nucleotide sequence ID" value="XM_054339397.1"/>
</dbReference>
<dbReference type="RefSeq" id="XP_054195373.1">
    <molecule id="O60512-1"/>
    <property type="nucleotide sequence ID" value="XM_054339398.1"/>
</dbReference>
<dbReference type="RefSeq" id="XP_054195374.1">
    <molecule id="O60512-1"/>
    <property type="nucleotide sequence ID" value="XM_054339399.1"/>
</dbReference>
<dbReference type="RefSeq" id="XP_054195375.1">
    <molecule id="O60512-1"/>
    <property type="nucleotide sequence ID" value="XM_054339400.1"/>
</dbReference>
<dbReference type="SMR" id="O60512"/>
<dbReference type="BioGRID" id="114246">
    <property type="interactions" value="126"/>
</dbReference>
<dbReference type="FunCoup" id="O60512">
    <property type="interactions" value="1997"/>
</dbReference>
<dbReference type="IntAct" id="O60512">
    <property type="interactions" value="73"/>
</dbReference>
<dbReference type="STRING" id="9606.ENSP00000480428"/>
<dbReference type="SwissLipids" id="SLP:000000790"/>
<dbReference type="CAZy" id="GT7">
    <property type="family name" value="Glycosyltransferase Family 7"/>
</dbReference>
<dbReference type="GlyConnect" id="1032">
    <property type="glycosylation" value="6 N-Linked glycans (2 sites)"/>
</dbReference>
<dbReference type="GlyCosmos" id="O60512">
    <property type="glycosylation" value="4 sites, 5 glycans"/>
</dbReference>
<dbReference type="GlyGen" id="O60512">
    <property type="glycosylation" value="8 sites, 9 N-linked glycans (4 sites), 1 O-linked glycan (3 sites)"/>
</dbReference>
<dbReference type="iPTMnet" id="O60512"/>
<dbReference type="PhosphoSitePlus" id="O60512"/>
<dbReference type="SwissPalm" id="O60512"/>
<dbReference type="BioMuta" id="B4GALT3"/>
<dbReference type="jPOST" id="O60512"/>
<dbReference type="MassIVE" id="O60512"/>
<dbReference type="PaxDb" id="9606-ENSP00000480428"/>
<dbReference type="PeptideAtlas" id="O60512"/>
<dbReference type="ProteomicsDB" id="49451">
    <molecule id="O60512-1"/>
</dbReference>
<dbReference type="ProteomicsDB" id="49452">
    <molecule id="O60512-2"/>
</dbReference>
<dbReference type="Pumba" id="O60512"/>
<dbReference type="Antibodypedia" id="2534">
    <property type="antibodies" value="222 antibodies from 27 providers"/>
</dbReference>
<dbReference type="DNASU" id="8703"/>
<dbReference type="Ensembl" id="ENST00000319769.10">
    <molecule id="O60512-1"/>
    <property type="protein sequence ID" value="ENSP00000320965.5"/>
    <property type="gene ID" value="ENSG00000158850.15"/>
</dbReference>
<dbReference type="Ensembl" id="ENST00000367998.5">
    <molecule id="O60512-1"/>
    <property type="protein sequence ID" value="ENSP00000356977.1"/>
    <property type="gene ID" value="ENSG00000158850.15"/>
</dbReference>
<dbReference type="Ensembl" id="ENST00000622395.4">
    <molecule id="O60512-1"/>
    <property type="protein sequence ID" value="ENSP00000480428.1"/>
    <property type="gene ID" value="ENSG00000158850.15"/>
</dbReference>
<dbReference type="GeneID" id="8703"/>
<dbReference type="KEGG" id="hsa:8703"/>
<dbReference type="MANE-Select" id="ENST00000319769.10">
    <property type="protein sequence ID" value="ENSP00000320965.5"/>
    <property type="RefSeq nucleotide sequence ID" value="NM_003779.4"/>
    <property type="RefSeq protein sequence ID" value="NP_003770.1"/>
</dbReference>
<dbReference type="UCSC" id="uc001fyq.3">
    <molecule id="O60512-1"/>
    <property type="organism name" value="human"/>
</dbReference>
<dbReference type="AGR" id="HGNC:926"/>
<dbReference type="CTD" id="8703"/>
<dbReference type="DisGeNET" id="8703"/>
<dbReference type="GeneCards" id="B4GALT3"/>
<dbReference type="HGNC" id="HGNC:926">
    <property type="gene designation" value="B4GALT3"/>
</dbReference>
<dbReference type="HPA" id="ENSG00000158850">
    <property type="expression patterns" value="Low tissue specificity"/>
</dbReference>
<dbReference type="MalaCards" id="B4GALT3"/>
<dbReference type="MIM" id="604014">
    <property type="type" value="gene"/>
</dbReference>
<dbReference type="neXtProt" id="NX_O60512"/>
<dbReference type="OpenTargets" id="ENSG00000158850"/>
<dbReference type="PharmGKB" id="PA25225"/>
<dbReference type="VEuPathDB" id="HostDB:ENSG00000158850"/>
<dbReference type="eggNOG" id="KOG3916">
    <property type="taxonomic scope" value="Eukaryota"/>
</dbReference>
<dbReference type="GeneTree" id="ENSGT00940000158549"/>
<dbReference type="HOGENOM" id="CLU_044391_1_2_1"/>
<dbReference type="InParanoid" id="O60512"/>
<dbReference type="OMA" id="CDPGGPR"/>
<dbReference type="OrthoDB" id="10016069at2759"/>
<dbReference type="PAN-GO" id="O60512">
    <property type="GO annotations" value="4 GO annotations based on evolutionary models"/>
</dbReference>
<dbReference type="PhylomeDB" id="O60512"/>
<dbReference type="TreeFam" id="TF312834"/>
<dbReference type="BioCyc" id="MetaCyc:HS08336-MONOMER"/>
<dbReference type="PathwayCommons" id="O60512"/>
<dbReference type="Reactome" id="R-HSA-2022854">
    <property type="pathway name" value="Keratan sulfate biosynthesis"/>
</dbReference>
<dbReference type="Reactome" id="R-HSA-975577">
    <property type="pathway name" value="N-Glycan antennae elongation"/>
</dbReference>
<dbReference type="SignaLink" id="O60512"/>
<dbReference type="UniPathway" id="UPA00378"/>
<dbReference type="BioGRID-ORCS" id="8703">
    <property type="hits" value="33 hits in 1156 CRISPR screens"/>
</dbReference>
<dbReference type="ChiTaRS" id="B4GALT3">
    <property type="organism name" value="human"/>
</dbReference>
<dbReference type="GeneWiki" id="B4GALT3"/>
<dbReference type="GenomeRNAi" id="8703"/>
<dbReference type="Pharos" id="O60512">
    <property type="development level" value="Tbio"/>
</dbReference>
<dbReference type="PRO" id="PR:O60512"/>
<dbReference type="Proteomes" id="UP000005640">
    <property type="component" value="Chromosome 1"/>
</dbReference>
<dbReference type="RNAct" id="O60512">
    <property type="molecule type" value="protein"/>
</dbReference>
<dbReference type="Bgee" id="ENSG00000158850">
    <property type="expression patterns" value="Expressed in oocyte and 198 other cell types or tissues"/>
</dbReference>
<dbReference type="ExpressionAtlas" id="O60512">
    <property type="expression patterns" value="baseline and differential"/>
</dbReference>
<dbReference type="GO" id="GO:0005829">
    <property type="term" value="C:cytosol"/>
    <property type="evidence" value="ECO:0000314"/>
    <property type="project" value="HPA"/>
</dbReference>
<dbReference type="GO" id="GO:0070062">
    <property type="term" value="C:extracellular exosome"/>
    <property type="evidence" value="ECO:0007005"/>
    <property type="project" value="UniProtKB"/>
</dbReference>
<dbReference type="GO" id="GO:0005794">
    <property type="term" value="C:Golgi apparatus"/>
    <property type="evidence" value="ECO:0000314"/>
    <property type="project" value="HPA"/>
</dbReference>
<dbReference type="GO" id="GO:0032580">
    <property type="term" value="C:Golgi cisterna membrane"/>
    <property type="evidence" value="ECO:0007669"/>
    <property type="project" value="UniProtKB-SubCell"/>
</dbReference>
<dbReference type="GO" id="GO:0000139">
    <property type="term" value="C:Golgi membrane"/>
    <property type="evidence" value="ECO:0000304"/>
    <property type="project" value="Reactome"/>
</dbReference>
<dbReference type="GO" id="GO:0003831">
    <property type="term" value="F:beta-N-acetylglucosaminylglycopeptide beta-1,4-galactosyltransferase activity"/>
    <property type="evidence" value="ECO:0007669"/>
    <property type="project" value="UniProtKB-EC"/>
</dbReference>
<dbReference type="GO" id="GO:0008378">
    <property type="term" value="F:galactosyltransferase activity"/>
    <property type="evidence" value="ECO:0000314"/>
    <property type="project" value="BHF-UCL"/>
</dbReference>
<dbReference type="GO" id="GO:0046872">
    <property type="term" value="F:metal ion binding"/>
    <property type="evidence" value="ECO:0007669"/>
    <property type="project" value="UniProtKB-KW"/>
</dbReference>
<dbReference type="GO" id="GO:0003945">
    <property type="term" value="F:N-acetyllactosamine synthase activity"/>
    <property type="evidence" value="ECO:0007669"/>
    <property type="project" value="UniProtKB-EC"/>
</dbReference>
<dbReference type="GO" id="GO:0005975">
    <property type="term" value="P:carbohydrate metabolic process"/>
    <property type="evidence" value="ECO:0007669"/>
    <property type="project" value="InterPro"/>
</dbReference>
<dbReference type="GO" id="GO:0006682">
    <property type="term" value="P:galactosylceramide biosynthetic process"/>
    <property type="evidence" value="ECO:0000314"/>
    <property type="project" value="BHF-UCL"/>
</dbReference>
<dbReference type="GO" id="GO:0070085">
    <property type="term" value="P:glycosylation"/>
    <property type="evidence" value="ECO:0000318"/>
    <property type="project" value="GO_Central"/>
</dbReference>
<dbReference type="GO" id="GO:0006486">
    <property type="term" value="P:protein glycosylation"/>
    <property type="evidence" value="ECO:0007669"/>
    <property type="project" value="UniProtKB-UniPathway"/>
</dbReference>
<dbReference type="CDD" id="cd00899">
    <property type="entry name" value="b4GalT"/>
    <property type="match status" value="1"/>
</dbReference>
<dbReference type="FunFam" id="3.90.550.10:FF:000028">
    <property type="entry name" value="beta-1,4-galactosyltransferase 1"/>
    <property type="match status" value="1"/>
</dbReference>
<dbReference type="Gene3D" id="3.90.550.10">
    <property type="entry name" value="Spore Coat Polysaccharide Biosynthesis Protein SpsA, Chain A"/>
    <property type="match status" value="1"/>
</dbReference>
<dbReference type="InterPro" id="IPR003859">
    <property type="entry name" value="Galactosyl_T"/>
</dbReference>
<dbReference type="InterPro" id="IPR027791">
    <property type="entry name" value="Galactosyl_T_C"/>
</dbReference>
<dbReference type="InterPro" id="IPR027995">
    <property type="entry name" value="Galactosyl_T_N"/>
</dbReference>
<dbReference type="InterPro" id="IPR029044">
    <property type="entry name" value="Nucleotide-diphossugar_trans"/>
</dbReference>
<dbReference type="PANTHER" id="PTHR19300">
    <property type="entry name" value="BETA-1,4-GALACTOSYLTRANSFERASE"/>
    <property type="match status" value="1"/>
</dbReference>
<dbReference type="PANTHER" id="PTHR19300:SF33">
    <property type="entry name" value="BETA-1,4-GALACTOSYLTRANSFERASE 3"/>
    <property type="match status" value="1"/>
</dbReference>
<dbReference type="Pfam" id="PF02709">
    <property type="entry name" value="Glyco_transf_7C"/>
    <property type="match status" value="1"/>
</dbReference>
<dbReference type="Pfam" id="PF13733">
    <property type="entry name" value="Glyco_transf_7N"/>
    <property type="match status" value="1"/>
</dbReference>
<dbReference type="PRINTS" id="PR02050">
    <property type="entry name" value="B14GALTRFASE"/>
</dbReference>
<dbReference type="SUPFAM" id="SSF53448">
    <property type="entry name" value="Nucleotide-diphospho-sugar transferases"/>
    <property type="match status" value="1"/>
</dbReference>
<organism>
    <name type="scientific">Homo sapiens</name>
    <name type="common">Human</name>
    <dbReference type="NCBI Taxonomy" id="9606"/>
    <lineage>
        <taxon>Eukaryota</taxon>
        <taxon>Metazoa</taxon>
        <taxon>Chordata</taxon>
        <taxon>Craniata</taxon>
        <taxon>Vertebrata</taxon>
        <taxon>Euteleostomi</taxon>
        <taxon>Mammalia</taxon>
        <taxon>Eutheria</taxon>
        <taxon>Euarchontoglires</taxon>
        <taxon>Primates</taxon>
        <taxon>Haplorrhini</taxon>
        <taxon>Catarrhini</taxon>
        <taxon>Hominidae</taxon>
        <taxon>Homo</taxon>
    </lineage>
</organism>
<name>B4GT3_HUMAN</name>
<evidence type="ECO:0000250" key="1"/>
<evidence type="ECO:0000255" key="2"/>
<evidence type="ECO:0000256" key="3">
    <source>
        <dbReference type="SAM" id="MobiDB-lite"/>
    </source>
</evidence>
<evidence type="ECO:0000269" key="4">
    <source>
    </source>
</evidence>
<evidence type="ECO:0000269" key="5">
    <source>
    </source>
</evidence>
<evidence type="ECO:0000303" key="6">
    <source>
    </source>
</evidence>
<evidence type="ECO:0000303" key="7">
    <source>
    </source>
</evidence>
<evidence type="ECO:0000305" key="8"/>
<evidence type="ECO:0000312" key="9">
    <source>
        <dbReference type="HGNC" id="HGNC:926"/>
    </source>
</evidence>
<sequence>MLRRLLERPCTLALLVGSQLAVMMYLSLGGFRSLSALFGRDQGPTFDYSHPRDVYSNLSHLPGAPGGPPAPQGLPYCPERSPLLVGPVSVSFSPVPSLAEIVERNPRVEPGGRYRPAGCEPRSRTAIIVPHRAREHHLRLLLYHLHPFLQRQQLAYGIYVIHQAGNGTFNRAKLLNVGVREALRDEEWDCLFLHDVDLLPENDHNLYVCDPRGPRHVAVAMNKFGYSLPYPQYFGGVSALTPDQYLKMNGFPNEYWGWGGEDDDIATRVRLAGMKISRPPTSVGHYKMVKHRGDKGNEENPHRFDLLVRTQNSWTQDGMNSLTYQLLARELGPLYTNITADIGTDPRGPRAPSGPRYPPGSSQAFRQEMLQRRPPARPGPLSTANHTALRGSH</sequence>
<gene>
    <name evidence="9" type="primary">B4GALT3</name>
</gene>
<protein>
    <recommendedName>
        <fullName evidence="8">Beta-1,4-galactosyltransferase 3</fullName>
        <shortName evidence="7">Beta-1,4-GalTase 3</shortName>
        <shortName>Beta4Gal-T3</shortName>
        <shortName evidence="7">b4Gal-T3</shortName>
        <ecNumber evidence="5">2.4.1.-</ecNumber>
    </recommendedName>
    <alternativeName>
        <fullName>Beta-N-acetylglucosaminyl-glycolipid beta-1,4-galactosyltransferase</fullName>
    </alternativeName>
    <alternativeName>
        <fullName evidence="7">Beta-N-acetylglucosaminylglycopeptide beta-1,4-galactosyltransferase</fullName>
        <ecNumber evidence="5">2.4.1.38</ecNumber>
    </alternativeName>
    <alternativeName>
        <fullName evidence="7">N-acetyllactosamine synthase</fullName>
        <ecNumber evidence="5">2.4.1.90</ecNumber>
    </alternativeName>
    <alternativeName>
        <fullName>Nal synthase</fullName>
    </alternativeName>
    <alternativeName>
        <fullName evidence="7">Neolactotriaosylceramide beta-1,4-galactosyltransferase</fullName>
        <ecNumber evidence="5">2.4.1.275</ecNumber>
    </alternativeName>
    <alternativeName>
        <fullName>UDP-Gal:beta-GlcNAc beta-1,4-galactosyltransferase 3</fullName>
    </alternativeName>
    <alternativeName>
        <fullName>UDP-galactose:beta-N-acetylglucosamine beta-1,4-galactosyltransferase 3</fullName>
    </alternativeName>
</protein>
<reference key="1">
    <citation type="journal article" date="1997" name="J. Biol. Chem.">
        <title>A family of human beta4-galactosyltransferases. Cloning and expression of two novel UDP-galactose:beta-n-acetylglucosamine beta1, 4-galactosyltransferases, beta4Gal-T2 and beta4Gal-T3.</title>
        <authorList>
            <person name="Almeida R."/>
            <person name="Amado M."/>
            <person name="David L."/>
            <person name="Levery S.B."/>
            <person name="Holmes E.H."/>
            <person name="Merkx G."/>
            <person name="van Kessel A.G."/>
            <person name="Rygaard E."/>
            <person name="Hassan H."/>
            <person name="Bennett E."/>
            <person name="Clausen H."/>
        </authorList>
    </citation>
    <scope>NUCLEOTIDE SEQUENCE [MRNA] (ISOFORM 1)</scope>
    <scope>CATALYTIC ACTIVITY</scope>
    <scope>BIOPHYSICOCHEMICAL PROPERTIES</scope>
</reference>
<reference key="2">
    <citation type="journal article" date="1998" name="Glycobiology">
        <title>The expanding beta 4-galactosyltransferase gene family: messages from the databanks.</title>
        <authorList>
            <person name="Lo N.-W."/>
            <person name="Shaper J.H."/>
            <person name="Pevsner J."/>
            <person name="Shaper N.L."/>
        </authorList>
    </citation>
    <scope>NUCLEOTIDE SEQUENCE [MRNA] (ISOFORM 1)</scope>
</reference>
<reference key="3">
    <citation type="journal article" date="2001" name="Glycobiology">
        <title>Galactosylation of N-linked oligosaccharides by human beta-1,4-galactosyltransferases I, II, III, IV, V, and VI expressed in Sf-9 cells.</title>
        <authorList>
            <person name="Guo S."/>
            <person name="Sato T."/>
            <person name="Shirane K."/>
            <person name="Furukawa K."/>
        </authorList>
    </citation>
    <scope>NUCLEOTIDE SEQUENCE [MRNA] (ISOFORM 1)</scope>
    <scope>BIOPHYSICOCHEMICAL PROPERTIES</scope>
    <scope>CATALYTIC ACTIVITY</scope>
</reference>
<reference key="4">
    <citation type="journal article" date="2006" name="Nature">
        <title>The DNA sequence and biological annotation of human chromosome 1.</title>
        <authorList>
            <person name="Gregory S.G."/>
            <person name="Barlow K.F."/>
            <person name="McLay K.E."/>
            <person name="Kaul R."/>
            <person name="Swarbreck D."/>
            <person name="Dunham A."/>
            <person name="Scott C.E."/>
            <person name="Howe K.L."/>
            <person name="Woodfine K."/>
            <person name="Spencer C.C.A."/>
            <person name="Jones M.C."/>
            <person name="Gillson C."/>
            <person name="Searle S."/>
            <person name="Zhou Y."/>
            <person name="Kokocinski F."/>
            <person name="McDonald L."/>
            <person name="Evans R."/>
            <person name="Phillips K."/>
            <person name="Atkinson A."/>
            <person name="Cooper R."/>
            <person name="Jones C."/>
            <person name="Hall R.E."/>
            <person name="Andrews T.D."/>
            <person name="Lloyd C."/>
            <person name="Ainscough R."/>
            <person name="Almeida J.P."/>
            <person name="Ambrose K.D."/>
            <person name="Anderson F."/>
            <person name="Andrew R.W."/>
            <person name="Ashwell R.I.S."/>
            <person name="Aubin K."/>
            <person name="Babbage A.K."/>
            <person name="Bagguley C.L."/>
            <person name="Bailey J."/>
            <person name="Beasley H."/>
            <person name="Bethel G."/>
            <person name="Bird C.P."/>
            <person name="Bray-Allen S."/>
            <person name="Brown J.Y."/>
            <person name="Brown A.J."/>
            <person name="Buckley D."/>
            <person name="Burton J."/>
            <person name="Bye J."/>
            <person name="Carder C."/>
            <person name="Chapman J.C."/>
            <person name="Clark S.Y."/>
            <person name="Clarke G."/>
            <person name="Clee C."/>
            <person name="Cobley V."/>
            <person name="Collier R.E."/>
            <person name="Corby N."/>
            <person name="Coville G.J."/>
            <person name="Davies J."/>
            <person name="Deadman R."/>
            <person name="Dunn M."/>
            <person name="Earthrowl M."/>
            <person name="Ellington A.G."/>
            <person name="Errington H."/>
            <person name="Frankish A."/>
            <person name="Frankland J."/>
            <person name="French L."/>
            <person name="Garner P."/>
            <person name="Garnett J."/>
            <person name="Gay L."/>
            <person name="Ghori M.R.J."/>
            <person name="Gibson R."/>
            <person name="Gilby L.M."/>
            <person name="Gillett W."/>
            <person name="Glithero R.J."/>
            <person name="Grafham D.V."/>
            <person name="Griffiths C."/>
            <person name="Griffiths-Jones S."/>
            <person name="Grocock R."/>
            <person name="Hammond S."/>
            <person name="Harrison E.S.I."/>
            <person name="Hart E."/>
            <person name="Haugen E."/>
            <person name="Heath P.D."/>
            <person name="Holmes S."/>
            <person name="Holt K."/>
            <person name="Howden P.J."/>
            <person name="Hunt A.R."/>
            <person name="Hunt S.E."/>
            <person name="Hunter G."/>
            <person name="Isherwood J."/>
            <person name="James R."/>
            <person name="Johnson C."/>
            <person name="Johnson D."/>
            <person name="Joy A."/>
            <person name="Kay M."/>
            <person name="Kershaw J.K."/>
            <person name="Kibukawa M."/>
            <person name="Kimberley A.M."/>
            <person name="King A."/>
            <person name="Knights A.J."/>
            <person name="Lad H."/>
            <person name="Laird G."/>
            <person name="Lawlor S."/>
            <person name="Leongamornlert D.A."/>
            <person name="Lloyd D.M."/>
            <person name="Loveland J."/>
            <person name="Lovell J."/>
            <person name="Lush M.J."/>
            <person name="Lyne R."/>
            <person name="Martin S."/>
            <person name="Mashreghi-Mohammadi M."/>
            <person name="Matthews L."/>
            <person name="Matthews N.S.W."/>
            <person name="McLaren S."/>
            <person name="Milne S."/>
            <person name="Mistry S."/>
            <person name="Moore M.J.F."/>
            <person name="Nickerson T."/>
            <person name="O'Dell C.N."/>
            <person name="Oliver K."/>
            <person name="Palmeiri A."/>
            <person name="Palmer S.A."/>
            <person name="Parker A."/>
            <person name="Patel D."/>
            <person name="Pearce A.V."/>
            <person name="Peck A.I."/>
            <person name="Pelan S."/>
            <person name="Phelps K."/>
            <person name="Phillimore B.J."/>
            <person name="Plumb R."/>
            <person name="Rajan J."/>
            <person name="Raymond C."/>
            <person name="Rouse G."/>
            <person name="Saenphimmachak C."/>
            <person name="Sehra H.K."/>
            <person name="Sheridan E."/>
            <person name="Shownkeen R."/>
            <person name="Sims S."/>
            <person name="Skuce C.D."/>
            <person name="Smith M."/>
            <person name="Steward C."/>
            <person name="Subramanian S."/>
            <person name="Sycamore N."/>
            <person name="Tracey A."/>
            <person name="Tromans A."/>
            <person name="Van Helmond Z."/>
            <person name="Wall M."/>
            <person name="Wallis J.M."/>
            <person name="White S."/>
            <person name="Whitehead S.L."/>
            <person name="Wilkinson J.E."/>
            <person name="Willey D.L."/>
            <person name="Williams H."/>
            <person name="Wilming L."/>
            <person name="Wray P.W."/>
            <person name="Wu Z."/>
            <person name="Coulson A."/>
            <person name="Vaudin M."/>
            <person name="Sulston J.E."/>
            <person name="Durbin R.M."/>
            <person name="Hubbard T."/>
            <person name="Wooster R."/>
            <person name="Dunham I."/>
            <person name="Carter N.P."/>
            <person name="McVean G."/>
            <person name="Ross M.T."/>
            <person name="Harrow J."/>
            <person name="Olson M.V."/>
            <person name="Beck S."/>
            <person name="Rogers J."/>
            <person name="Bentley D.R."/>
        </authorList>
    </citation>
    <scope>NUCLEOTIDE SEQUENCE [LARGE SCALE GENOMIC DNA]</scope>
</reference>
<reference key="5">
    <citation type="submission" date="2005-09" db="EMBL/GenBank/DDBJ databases">
        <authorList>
            <person name="Mural R.J."/>
            <person name="Istrail S."/>
            <person name="Sutton G.G."/>
            <person name="Florea L."/>
            <person name="Halpern A.L."/>
            <person name="Mobarry C.M."/>
            <person name="Lippert R."/>
            <person name="Walenz B."/>
            <person name="Shatkay H."/>
            <person name="Dew I."/>
            <person name="Miller J.R."/>
            <person name="Flanigan M.J."/>
            <person name="Edwards N.J."/>
            <person name="Bolanos R."/>
            <person name="Fasulo D."/>
            <person name="Halldorsson B.V."/>
            <person name="Hannenhalli S."/>
            <person name="Turner R."/>
            <person name="Yooseph S."/>
            <person name="Lu F."/>
            <person name="Nusskern D.R."/>
            <person name="Shue B.C."/>
            <person name="Zheng X.H."/>
            <person name="Zhong F."/>
            <person name="Delcher A.L."/>
            <person name="Huson D.H."/>
            <person name="Kravitz S.A."/>
            <person name="Mouchard L."/>
            <person name="Reinert K."/>
            <person name="Remington K.A."/>
            <person name="Clark A.G."/>
            <person name="Waterman M.S."/>
            <person name="Eichler E.E."/>
            <person name="Adams M.D."/>
            <person name="Hunkapiller M.W."/>
            <person name="Myers E.W."/>
            <person name="Venter J.C."/>
        </authorList>
    </citation>
    <scope>NUCLEOTIDE SEQUENCE [LARGE SCALE GENOMIC DNA]</scope>
</reference>
<reference key="6">
    <citation type="journal article" date="2004" name="Nat. Genet.">
        <title>Complete sequencing and characterization of 21,243 full-length human cDNAs.</title>
        <authorList>
            <person name="Ota T."/>
            <person name="Suzuki Y."/>
            <person name="Nishikawa T."/>
            <person name="Otsuki T."/>
            <person name="Sugiyama T."/>
            <person name="Irie R."/>
            <person name="Wakamatsu A."/>
            <person name="Hayashi K."/>
            <person name="Sato H."/>
            <person name="Nagai K."/>
            <person name="Kimura K."/>
            <person name="Makita H."/>
            <person name="Sekine M."/>
            <person name="Obayashi M."/>
            <person name="Nishi T."/>
            <person name="Shibahara T."/>
            <person name="Tanaka T."/>
            <person name="Ishii S."/>
            <person name="Yamamoto J."/>
            <person name="Saito K."/>
            <person name="Kawai Y."/>
            <person name="Isono Y."/>
            <person name="Nakamura Y."/>
            <person name="Nagahari K."/>
            <person name="Murakami K."/>
            <person name="Yasuda T."/>
            <person name="Iwayanagi T."/>
            <person name="Wagatsuma M."/>
            <person name="Shiratori A."/>
            <person name="Sudo H."/>
            <person name="Hosoiri T."/>
            <person name="Kaku Y."/>
            <person name="Kodaira H."/>
            <person name="Kondo H."/>
            <person name="Sugawara M."/>
            <person name="Takahashi M."/>
            <person name="Kanda K."/>
            <person name="Yokoi T."/>
            <person name="Furuya T."/>
            <person name="Kikkawa E."/>
            <person name="Omura Y."/>
            <person name="Abe K."/>
            <person name="Kamihara K."/>
            <person name="Katsuta N."/>
            <person name="Sato K."/>
            <person name="Tanikawa M."/>
            <person name="Yamazaki M."/>
            <person name="Ninomiya K."/>
            <person name="Ishibashi T."/>
            <person name="Yamashita H."/>
            <person name="Murakawa K."/>
            <person name="Fujimori K."/>
            <person name="Tanai H."/>
            <person name="Kimata M."/>
            <person name="Watanabe M."/>
            <person name="Hiraoka S."/>
            <person name="Chiba Y."/>
            <person name="Ishida S."/>
            <person name="Ono Y."/>
            <person name="Takiguchi S."/>
            <person name="Watanabe S."/>
            <person name="Yosida M."/>
            <person name="Hotuta T."/>
            <person name="Kusano J."/>
            <person name="Kanehori K."/>
            <person name="Takahashi-Fujii A."/>
            <person name="Hara H."/>
            <person name="Tanase T.-O."/>
            <person name="Nomura Y."/>
            <person name="Togiya S."/>
            <person name="Komai F."/>
            <person name="Hara R."/>
            <person name="Takeuchi K."/>
            <person name="Arita M."/>
            <person name="Imose N."/>
            <person name="Musashino K."/>
            <person name="Yuuki H."/>
            <person name="Oshima A."/>
            <person name="Sasaki N."/>
            <person name="Aotsuka S."/>
            <person name="Yoshikawa Y."/>
            <person name="Matsunawa H."/>
            <person name="Ichihara T."/>
            <person name="Shiohata N."/>
            <person name="Sano S."/>
            <person name="Moriya S."/>
            <person name="Momiyama H."/>
            <person name="Satoh N."/>
            <person name="Takami S."/>
            <person name="Terashima Y."/>
            <person name="Suzuki O."/>
            <person name="Nakagawa S."/>
            <person name="Senoh A."/>
            <person name="Mizoguchi H."/>
            <person name="Goto Y."/>
            <person name="Shimizu F."/>
            <person name="Wakebe H."/>
            <person name="Hishigaki H."/>
            <person name="Watanabe T."/>
            <person name="Sugiyama A."/>
            <person name="Takemoto M."/>
            <person name="Kawakami B."/>
            <person name="Yamazaki M."/>
            <person name="Watanabe K."/>
            <person name="Kumagai A."/>
            <person name="Itakura S."/>
            <person name="Fukuzumi Y."/>
            <person name="Fujimori Y."/>
            <person name="Komiyama M."/>
            <person name="Tashiro H."/>
            <person name="Tanigami A."/>
            <person name="Fujiwara T."/>
            <person name="Ono T."/>
            <person name="Yamada K."/>
            <person name="Fujii Y."/>
            <person name="Ozaki K."/>
            <person name="Hirao M."/>
            <person name="Ohmori Y."/>
            <person name="Kawabata A."/>
            <person name="Hikiji T."/>
            <person name="Kobatake N."/>
            <person name="Inagaki H."/>
            <person name="Ikema Y."/>
            <person name="Okamoto S."/>
            <person name="Okitani R."/>
            <person name="Kawakami T."/>
            <person name="Noguchi S."/>
            <person name="Itoh T."/>
            <person name="Shigeta K."/>
            <person name="Senba T."/>
            <person name="Matsumura K."/>
            <person name="Nakajima Y."/>
            <person name="Mizuno T."/>
            <person name="Morinaga M."/>
            <person name="Sasaki M."/>
            <person name="Togashi T."/>
            <person name="Oyama M."/>
            <person name="Hata H."/>
            <person name="Watanabe M."/>
            <person name="Komatsu T."/>
            <person name="Mizushima-Sugano J."/>
            <person name="Satoh T."/>
            <person name="Shirai Y."/>
            <person name="Takahashi Y."/>
            <person name="Nakagawa K."/>
            <person name="Okumura K."/>
            <person name="Nagase T."/>
            <person name="Nomura N."/>
            <person name="Kikuchi H."/>
            <person name="Masuho Y."/>
            <person name="Yamashita R."/>
            <person name="Nakai K."/>
            <person name="Yada T."/>
            <person name="Nakamura Y."/>
            <person name="Ohara O."/>
            <person name="Isogai T."/>
            <person name="Sugano S."/>
        </authorList>
    </citation>
    <scope>NUCLEOTIDE SEQUENCE [LARGE SCALE MRNA] (ISOFORM 2)</scope>
    <source>
        <tissue>Ovary</tissue>
    </source>
</reference>
<reference key="7">
    <citation type="journal article" date="2004" name="Genome Res.">
        <title>The status, quality, and expansion of the NIH full-length cDNA project: the Mammalian Gene Collection (MGC).</title>
        <authorList>
            <consortium name="The MGC Project Team"/>
        </authorList>
    </citation>
    <scope>NUCLEOTIDE SEQUENCE [LARGE SCALE MRNA] (ISOFORM 1)</scope>
    <source>
        <tissue>Brain</tissue>
        <tissue>Eye</tissue>
        <tissue>Lymph</tissue>
    </source>
</reference>
<reference key="8">
    <citation type="journal article" date="1999" name="Biochim. Biophys. Acta">
        <title>Identification and characterization of large galactosyltransferase gene families: galactosyltransferases for all functions.</title>
        <authorList>
            <person name="Amado M."/>
            <person name="Almeida R."/>
            <person name="Schwientek T."/>
            <person name="Clausen H."/>
        </authorList>
    </citation>
    <scope>REVIEW</scope>
</reference>
<accession>O60512</accession>
<accession>D3DVG3</accession>
<accession>O60910</accession>
<accession>Q9BPZ4</accession>
<accession>Q9H8T2</accession>
<comment type="function">
    <text evidence="4 5">Responsible for the synthesis of complex-type N-linked oligosaccharides in many glycoproteins as well as the carbohydrate moieties of glycolipids.</text>
</comment>
<comment type="catalytic activity">
    <reaction evidence="4 5">
        <text>an N-acetyl-beta-D-glucosaminyl derivative + UDP-alpha-D-galactose = a beta-D-galactosyl-(1-&gt;4)-N-acetyl-beta-D-glucosaminyl derivative + UDP + H(+)</text>
        <dbReference type="Rhea" id="RHEA:22932"/>
        <dbReference type="ChEBI" id="CHEBI:15378"/>
        <dbReference type="ChEBI" id="CHEBI:58223"/>
        <dbReference type="ChEBI" id="CHEBI:61631"/>
        <dbReference type="ChEBI" id="CHEBI:66914"/>
        <dbReference type="ChEBI" id="CHEBI:133507"/>
        <dbReference type="EC" id="2.4.1.38"/>
    </reaction>
    <physiologicalReaction direction="left-to-right" evidence="4 5">
        <dbReference type="Rhea" id="RHEA:22933"/>
    </physiologicalReaction>
</comment>
<comment type="catalytic activity">
    <reaction evidence="5">
        <text>N-acetyl-D-glucosamine + UDP-alpha-D-galactose = beta-D-galactosyl-(1-&gt;4)-N-acetyl-D-glucosamine + UDP + H(+)</text>
        <dbReference type="Rhea" id="RHEA:17745"/>
        <dbReference type="ChEBI" id="CHEBI:15378"/>
        <dbReference type="ChEBI" id="CHEBI:58223"/>
        <dbReference type="ChEBI" id="CHEBI:60152"/>
        <dbReference type="ChEBI" id="CHEBI:66914"/>
        <dbReference type="ChEBI" id="CHEBI:506227"/>
        <dbReference type="EC" id="2.4.1.90"/>
    </reaction>
    <physiologicalReaction direction="left-to-right" evidence="5">
        <dbReference type="Rhea" id="RHEA:17746"/>
    </physiologicalReaction>
</comment>
<comment type="catalytic activity">
    <reaction evidence="5">
        <text>a beta-D-GlcNAc-(1-&gt;3)-beta-D-Gal-(1-&gt;4)-beta-D-Glc-(1&lt;-&gt;1)-Cer(d18:1(4E)) + UDP-alpha-D-galactose = a neolactoside nLc4Cer(d18:1(4E)) + UDP + H(+)</text>
        <dbReference type="Rhea" id="RHEA:31499"/>
        <dbReference type="ChEBI" id="CHEBI:15378"/>
        <dbReference type="ChEBI" id="CHEBI:17006"/>
        <dbReference type="ChEBI" id="CHEBI:17103"/>
        <dbReference type="ChEBI" id="CHEBI:58223"/>
        <dbReference type="ChEBI" id="CHEBI:66914"/>
        <dbReference type="EC" id="2.4.1.275"/>
    </reaction>
    <physiologicalReaction direction="left-to-right" evidence="5">
        <dbReference type="Rhea" id="RHEA:31500"/>
    </physiologicalReaction>
</comment>
<comment type="catalytic activity">
    <reaction evidence="5">
        <text>a beta-D-glucosylceramide + UDP-alpha-D-galactose = a beta-D-galactosyl-(1-&gt;4)-beta-D-glucosyl-(1&lt;-&gt;1)-ceramide + UDP + H(+)</text>
        <dbReference type="Rhea" id="RHEA:62552"/>
        <dbReference type="ChEBI" id="CHEBI:15378"/>
        <dbReference type="ChEBI" id="CHEBI:58223"/>
        <dbReference type="ChEBI" id="CHEBI:66914"/>
        <dbReference type="ChEBI" id="CHEBI:79208"/>
        <dbReference type="ChEBI" id="CHEBI:83264"/>
    </reaction>
    <physiologicalReaction direction="left-to-right" evidence="5">
        <dbReference type="Rhea" id="RHEA:62553"/>
    </physiologicalReaction>
</comment>
<comment type="catalytic activity">
    <reaction evidence="5">
        <text>a neolactoside IV(3)-beta-GlcNAc-nLc4Cer + UDP-alpha-D-galactose = a neolactoside nLc6Cer + UDP + H(+)</text>
        <dbReference type="Rhea" id="RHEA:62548"/>
        <dbReference type="ChEBI" id="CHEBI:15378"/>
        <dbReference type="ChEBI" id="CHEBI:58223"/>
        <dbReference type="ChEBI" id="CHEBI:66914"/>
        <dbReference type="ChEBI" id="CHEBI:90357"/>
        <dbReference type="ChEBI" id="CHEBI:144378"/>
    </reaction>
    <physiologicalReaction direction="left-to-right" evidence="5">
        <dbReference type="Rhea" id="RHEA:62549"/>
    </physiologicalReaction>
</comment>
<comment type="cofactor">
    <cofactor evidence="1">
        <name>Mn(2+)</name>
        <dbReference type="ChEBI" id="CHEBI:29035"/>
    </cofactor>
</comment>
<comment type="biophysicochemical properties">
    <kinetics>
        <KM evidence="4">63 uM for GlcNAc-B-S-pNP</KM>
        <KM evidence="5">0.084 mM for UDP-galactose</KM>
        <KM evidence="5">0.58 mM for benzyl-beta-D-GlcNAc</KM>
        <KM evidence="5">13.1 mM for D-GlcNAc</KM>
        <Vmax evidence="5">64.35 pmol/min/mg enzyme towards UDP-galactose</Vmax>
        <Vmax evidence="5">66.25 pmol/min/mg enzyme towards for benzyl-beta-D-GlcNAc</Vmax>
        <Vmax evidence="5">60.85 pmol/min/mg enzyme towards D-GlcNAc</Vmax>
    </kinetics>
</comment>
<comment type="pathway">
    <text evidence="4 5">Protein modification; protein glycosylation.</text>
</comment>
<comment type="subcellular location">
    <subcellularLocation>
        <location>Golgi apparatus</location>
        <location>Golgi stack membrane</location>
        <topology>Single-pass type II membrane protein</topology>
    </subcellularLocation>
    <text>Trans cisternae of Golgi stack.</text>
</comment>
<comment type="alternative products">
    <event type="alternative splicing"/>
    <isoform>
        <id>O60512-1</id>
        <name>1</name>
        <sequence type="displayed"/>
    </isoform>
    <isoform>
        <id>O60512-2</id>
        <name>2</name>
        <sequence type="described" ref="VSP_014106 VSP_014107"/>
    </isoform>
</comment>
<comment type="tissue specificity">
    <text evidence="5">Found in various tissues. Highest expression in placenta, prostate, testis, ovary, intestine and muscle, and in fetal brain.</text>
</comment>
<comment type="similarity">
    <text evidence="8">Belongs to the glycosyltransferase 7 family.</text>
</comment>
<comment type="online information" name="Functional Glycomics Gateway - GTase">
    <link uri="http://www.functionalglycomics.org/glycomics/molecule/jsp/glycoEnzyme/viewGlycoEnzyme.jsp?gbpId=gt_hum_438"/>
    <text>Beta-1,4-galactosyltransferase 3</text>
</comment>
<keyword id="KW-0025">Alternative splicing</keyword>
<keyword id="KW-1015">Disulfide bond</keyword>
<keyword id="KW-0325">Glycoprotein</keyword>
<keyword id="KW-0328">Glycosyltransferase</keyword>
<keyword id="KW-0333">Golgi apparatus</keyword>
<keyword id="KW-0443">Lipid metabolism</keyword>
<keyword id="KW-0464">Manganese</keyword>
<keyword id="KW-0472">Membrane</keyword>
<keyword id="KW-0479">Metal-binding</keyword>
<keyword id="KW-1267">Proteomics identification</keyword>
<keyword id="KW-1185">Reference proteome</keyword>
<keyword id="KW-0735">Signal-anchor</keyword>
<keyword id="KW-0808">Transferase</keyword>
<keyword id="KW-0812">Transmembrane</keyword>
<keyword id="KW-1133">Transmembrane helix</keyword>
<feature type="chain" id="PRO_0000080537" description="Beta-1,4-galactosyltransferase 3">
    <location>
        <begin position="1"/>
        <end position="393"/>
    </location>
</feature>
<feature type="topological domain" description="Cytoplasmic" evidence="2">
    <location>
        <begin position="1"/>
        <end position="10"/>
    </location>
</feature>
<feature type="transmembrane region" description="Helical; Signal-anchor for type II membrane protein" evidence="2">
    <location>
        <begin position="11"/>
        <end position="31"/>
    </location>
</feature>
<feature type="topological domain" description="Lumenal" evidence="2">
    <location>
        <begin position="32"/>
        <end position="393"/>
    </location>
</feature>
<feature type="region of interest" description="Disordered" evidence="3">
    <location>
        <begin position="339"/>
        <end position="393"/>
    </location>
</feature>
<feature type="binding site" evidence="1">
    <location>
        <begin position="130"/>
        <end position="134"/>
    </location>
    <ligand>
        <name>UDP-alpha-D-galactose</name>
        <dbReference type="ChEBI" id="CHEBI:66914"/>
    </ligand>
</feature>
<feature type="binding site" evidence="1">
    <location>
        <begin position="169"/>
        <end position="171"/>
    </location>
    <ligand>
        <name>UDP-alpha-D-galactose</name>
        <dbReference type="ChEBI" id="CHEBI:66914"/>
    </ligand>
</feature>
<feature type="binding site" evidence="1">
    <location>
        <begin position="196"/>
        <end position="197"/>
    </location>
    <ligand>
        <name>UDP-alpha-D-galactose</name>
        <dbReference type="ChEBI" id="CHEBI:66914"/>
    </ligand>
</feature>
<feature type="binding site" evidence="1">
    <location>
        <position position="197"/>
    </location>
    <ligand>
        <name>Mn(2+)</name>
        <dbReference type="ChEBI" id="CHEBI:29035"/>
    </ligand>
</feature>
<feature type="binding site" evidence="1">
    <location>
        <position position="226"/>
    </location>
    <ligand>
        <name>UDP-alpha-D-galactose</name>
        <dbReference type="ChEBI" id="CHEBI:66914"/>
    </ligand>
</feature>
<feature type="binding site" evidence="1">
    <location>
        <position position="258"/>
    </location>
    <ligand>
        <name>UDP-alpha-D-galactose</name>
        <dbReference type="ChEBI" id="CHEBI:66914"/>
    </ligand>
</feature>
<feature type="binding site" evidence="1">
    <location>
        <begin position="260"/>
        <end position="263"/>
    </location>
    <ligand>
        <name>N-acetyl-D-glucosamine</name>
        <dbReference type="ChEBI" id="CHEBI:506227"/>
    </ligand>
</feature>
<feature type="binding site" evidence="1">
    <location>
        <begin position="291"/>
        <end position="293"/>
    </location>
    <ligand>
        <name>UDP-alpha-D-galactose</name>
        <dbReference type="ChEBI" id="CHEBI:66914"/>
    </ligand>
</feature>
<feature type="binding site" evidence="1">
    <location>
        <position position="291"/>
    </location>
    <ligand>
        <name>Mn(2+)</name>
        <dbReference type="ChEBI" id="CHEBI:29035"/>
    </ligand>
</feature>
<feature type="binding site" evidence="1">
    <location>
        <position position="303"/>
    </location>
    <ligand>
        <name>N-acetyl-D-glucosamine</name>
        <dbReference type="ChEBI" id="CHEBI:506227"/>
    </ligand>
</feature>
<feature type="glycosylation site" description="N-linked (GlcNAc...) asparagine" evidence="2">
    <location>
        <position position="57"/>
    </location>
</feature>
<feature type="glycosylation site" description="N-linked (GlcNAc...) asparagine" evidence="2">
    <location>
        <position position="166"/>
    </location>
</feature>
<feature type="glycosylation site" description="N-linked (GlcNAc...) asparagine" evidence="2">
    <location>
        <position position="337"/>
    </location>
</feature>
<feature type="glycosylation site" description="N-linked (GlcNAc...) asparagine" evidence="2">
    <location>
        <position position="385"/>
    </location>
</feature>
<feature type="disulfide bond" evidence="1">
    <location>
        <begin position="77"/>
        <end position="119"/>
    </location>
</feature>
<feature type="disulfide bond" evidence="1">
    <location>
        <begin position="190"/>
        <end position="209"/>
    </location>
</feature>
<feature type="splice variant" id="VSP_014106" description="In isoform 2." evidence="6">
    <original>PAGCEPRSRTAIIVPHRAREHHLRLLLYHL</original>
    <variation>PAALPPAPLLAAPAACLWHLCHPPGWKWNI</variation>
    <location>
        <begin position="116"/>
        <end position="145"/>
    </location>
</feature>
<feature type="splice variant" id="VSP_014107" description="In isoform 2." evidence="6">
    <location>
        <begin position="146"/>
        <end position="393"/>
    </location>
</feature>
<feature type="sequence conflict" description="In Ref. 2; AAC39734." evidence="8" ref="2">
    <original>A</original>
    <variation>R</variation>
    <location>
        <position position="64"/>
    </location>
</feature>
<feature type="sequence conflict" description="In Ref. 2; AAC39734." evidence="8" ref="2">
    <original>G</original>
    <variation>A</variation>
    <location>
        <position position="112"/>
    </location>
</feature>
<feature type="sequence conflict" description="In Ref. 2; AAC39734." evidence="8" ref="2">
    <original>K</original>
    <variation>S</variation>
    <location>
        <position position="223"/>
    </location>
</feature>